<dbReference type="EMBL" id="CP000880">
    <property type="protein sequence ID" value="ABX22309.1"/>
    <property type="molecule type" value="Genomic_DNA"/>
</dbReference>
<dbReference type="SMR" id="A9MLY7"/>
<dbReference type="STRING" id="41514.SARI_02448"/>
<dbReference type="KEGG" id="ses:SARI_02448"/>
<dbReference type="HOGENOM" id="CLU_060739_1_2_6"/>
<dbReference type="Proteomes" id="UP000002084">
    <property type="component" value="Chromosome"/>
</dbReference>
<dbReference type="GO" id="GO:0003677">
    <property type="term" value="F:DNA binding"/>
    <property type="evidence" value="ECO:0007669"/>
    <property type="project" value="UniProtKB-UniRule"/>
</dbReference>
<dbReference type="GO" id="GO:0008270">
    <property type="term" value="F:zinc ion binding"/>
    <property type="evidence" value="ECO:0007669"/>
    <property type="project" value="UniProtKB-KW"/>
</dbReference>
<dbReference type="GO" id="GO:0006310">
    <property type="term" value="P:DNA recombination"/>
    <property type="evidence" value="ECO:0007669"/>
    <property type="project" value="UniProtKB-UniRule"/>
</dbReference>
<dbReference type="GO" id="GO:0006281">
    <property type="term" value="P:DNA repair"/>
    <property type="evidence" value="ECO:0007669"/>
    <property type="project" value="UniProtKB-UniRule"/>
</dbReference>
<dbReference type="CDD" id="cd01025">
    <property type="entry name" value="TOPRIM_recR"/>
    <property type="match status" value="1"/>
</dbReference>
<dbReference type="FunFam" id="1.10.8.420:FF:000001">
    <property type="entry name" value="Recombination protein RecR"/>
    <property type="match status" value="1"/>
</dbReference>
<dbReference type="FunFam" id="3.40.1360.10:FF:000001">
    <property type="entry name" value="Recombination protein RecR"/>
    <property type="match status" value="1"/>
</dbReference>
<dbReference type="Gene3D" id="3.40.1360.10">
    <property type="match status" value="1"/>
</dbReference>
<dbReference type="Gene3D" id="6.10.250.240">
    <property type="match status" value="1"/>
</dbReference>
<dbReference type="Gene3D" id="1.10.8.420">
    <property type="entry name" value="RecR Domain 1"/>
    <property type="match status" value="1"/>
</dbReference>
<dbReference type="HAMAP" id="MF_00017">
    <property type="entry name" value="RecR"/>
    <property type="match status" value="1"/>
</dbReference>
<dbReference type="InterPro" id="IPR000093">
    <property type="entry name" value="DNA_Rcmb_RecR"/>
</dbReference>
<dbReference type="InterPro" id="IPR023627">
    <property type="entry name" value="Rcmb_RecR"/>
</dbReference>
<dbReference type="InterPro" id="IPR015967">
    <property type="entry name" value="Rcmb_RecR_Znf"/>
</dbReference>
<dbReference type="InterPro" id="IPR006171">
    <property type="entry name" value="TOPRIM_dom"/>
</dbReference>
<dbReference type="InterPro" id="IPR034137">
    <property type="entry name" value="TOPRIM_RecR"/>
</dbReference>
<dbReference type="NCBIfam" id="TIGR00615">
    <property type="entry name" value="recR"/>
    <property type="match status" value="1"/>
</dbReference>
<dbReference type="PANTHER" id="PTHR30446">
    <property type="entry name" value="RECOMBINATION PROTEIN RECR"/>
    <property type="match status" value="1"/>
</dbReference>
<dbReference type="PANTHER" id="PTHR30446:SF0">
    <property type="entry name" value="RECOMBINATION PROTEIN RECR"/>
    <property type="match status" value="1"/>
</dbReference>
<dbReference type="Pfam" id="PF21175">
    <property type="entry name" value="RecR_C"/>
    <property type="match status" value="1"/>
</dbReference>
<dbReference type="Pfam" id="PF21176">
    <property type="entry name" value="RecR_HhH"/>
    <property type="match status" value="1"/>
</dbReference>
<dbReference type="Pfam" id="PF02132">
    <property type="entry name" value="RecR_ZnF"/>
    <property type="match status" value="1"/>
</dbReference>
<dbReference type="Pfam" id="PF13662">
    <property type="entry name" value="Toprim_4"/>
    <property type="match status" value="1"/>
</dbReference>
<dbReference type="SMART" id="SM00493">
    <property type="entry name" value="TOPRIM"/>
    <property type="match status" value="1"/>
</dbReference>
<dbReference type="SUPFAM" id="SSF111304">
    <property type="entry name" value="Recombination protein RecR"/>
    <property type="match status" value="1"/>
</dbReference>
<dbReference type="PROSITE" id="PS01300">
    <property type="entry name" value="RECR"/>
    <property type="match status" value="1"/>
</dbReference>
<dbReference type="PROSITE" id="PS50880">
    <property type="entry name" value="TOPRIM"/>
    <property type="match status" value="1"/>
</dbReference>
<feature type="chain" id="PRO_1000074129" description="Recombination protein RecR">
    <location>
        <begin position="1"/>
        <end position="201"/>
    </location>
</feature>
<feature type="domain" description="Toprim" evidence="1">
    <location>
        <begin position="81"/>
        <end position="176"/>
    </location>
</feature>
<feature type="zinc finger region" description="C4-type" evidence="1">
    <location>
        <begin position="57"/>
        <end position="72"/>
    </location>
</feature>
<accession>A9MLY7</accession>
<sequence>MQTSPLLTQLMEALRCLPGVGPKSAQRMAFTLLQRDRSGGMRLAQALTRAMAEIGHCADCRTFTEQEVCNICANPRRQENGQICVVESPADIYAIEQTGQFSGRYFVLMGHLSPLDGIGPDDIGLDRLEQRLVSEKISELILATNPTVEGEATANYIAELCAQYGVEASRIAHGVPVGGELEMVDGTTLSHSLAGRHKIIL</sequence>
<comment type="function">
    <text evidence="1">May play a role in DNA repair. It seems to be involved in an RecBC-independent recombinational process of DNA repair. It may act with RecF and RecO.</text>
</comment>
<comment type="similarity">
    <text evidence="1">Belongs to the RecR family.</text>
</comment>
<gene>
    <name evidence="1" type="primary">recR</name>
    <name type="ordered locus">SARI_02448</name>
</gene>
<evidence type="ECO:0000255" key="1">
    <source>
        <dbReference type="HAMAP-Rule" id="MF_00017"/>
    </source>
</evidence>
<reference key="1">
    <citation type="submission" date="2007-11" db="EMBL/GenBank/DDBJ databases">
        <authorList>
            <consortium name="The Salmonella enterica serovar Arizonae Genome Sequencing Project"/>
            <person name="McClelland M."/>
            <person name="Sanderson E.K."/>
            <person name="Porwollik S."/>
            <person name="Spieth J."/>
            <person name="Clifton W.S."/>
            <person name="Fulton R."/>
            <person name="Chunyan W."/>
            <person name="Wollam A."/>
            <person name="Shah N."/>
            <person name="Pepin K."/>
            <person name="Bhonagiri V."/>
            <person name="Nash W."/>
            <person name="Johnson M."/>
            <person name="Thiruvilangam P."/>
            <person name="Wilson R."/>
        </authorList>
    </citation>
    <scope>NUCLEOTIDE SEQUENCE [LARGE SCALE GENOMIC DNA]</scope>
    <source>
        <strain>ATCC BAA-731 / CDC346-86 / RSK2980</strain>
    </source>
</reference>
<proteinExistence type="inferred from homology"/>
<keyword id="KW-0227">DNA damage</keyword>
<keyword id="KW-0233">DNA recombination</keyword>
<keyword id="KW-0234">DNA repair</keyword>
<keyword id="KW-0479">Metal-binding</keyword>
<keyword id="KW-1185">Reference proteome</keyword>
<keyword id="KW-0862">Zinc</keyword>
<keyword id="KW-0863">Zinc-finger</keyword>
<name>RECR_SALAR</name>
<organism>
    <name type="scientific">Salmonella arizonae (strain ATCC BAA-731 / CDC346-86 / RSK2980)</name>
    <dbReference type="NCBI Taxonomy" id="41514"/>
    <lineage>
        <taxon>Bacteria</taxon>
        <taxon>Pseudomonadati</taxon>
        <taxon>Pseudomonadota</taxon>
        <taxon>Gammaproteobacteria</taxon>
        <taxon>Enterobacterales</taxon>
        <taxon>Enterobacteriaceae</taxon>
        <taxon>Salmonella</taxon>
    </lineage>
</organism>
<protein>
    <recommendedName>
        <fullName evidence="1">Recombination protein RecR</fullName>
    </recommendedName>
</protein>